<feature type="chain" id="PRO_1000123624" description="Translational regulator CsrA">
    <location>
        <begin position="1"/>
        <end position="77"/>
    </location>
</feature>
<reference key="1">
    <citation type="journal article" date="2012" name="BMC Microbiol.">
        <title>Genome sequence of Desulfitobacterium hafniense DCB-2, a Gram-positive anaerobe capable of dehalogenation and metal reduction.</title>
        <authorList>
            <person name="Kim S.H."/>
            <person name="Harzman C."/>
            <person name="Davis J.K."/>
            <person name="Hutcheson R."/>
            <person name="Broderick J.B."/>
            <person name="Marsh T.L."/>
            <person name="Tiedje J.M."/>
        </authorList>
    </citation>
    <scope>NUCLEOTIDE SEQUENCE [LARGE SCALE GENOMIC DNA]</scope>
    <source>
        <strain>DSM 10664 / DCB-2</strain>
    </source>
</reference>
<proteinExistence type="inferred from homology"/>
<accession>B8FTV6</accession>
<sequence length="77" mass="8479">MLALTRKAGERIVIGDNIVVTVVAIKGDSIRLTIDAPKEIKIYRGEIYDAIAAENKEAAVLMDLAELTALKEFHIKK</sequence>
<protein>
    <recommendedName>
        <fullName evidence="1">Translational regulator CsrA</fullName>
    </recommendedName>
</protein>
<keyword id="KW-1005">Bacterial flagellum biogenesis</keyword>
<keyword id="KW-0963">Cytoplasm</keyword>
<keyword id="KW-0678">Repressor</keyword>
<keyword id="KW-0694">RNA-binding</keyword>
<keyword id="KW-0810">Translation regulation</keyword>
<name>CSRA_DESHD</name>
<comment type="function">
    <text evidence="1">A translational regulator that binds mRNA to regulate translation initiation and/or mRNA stability. Usually binds in the 5'-UTR at or near the Shine-Dalgarno sequence preventing ribosome-binding, thus repressing translation. Its main target seems to be the major flagellin gene, while its function is anatagonized by FliW.</text>
</comment>
<comment type="subunit">
    <text evidence="1">Homodimer; the beta-strands of each monomer intercalate to form a hydrophobic core, while the alpha-helices form wings that extend away from the core.</text>
</comment>
<comment type="subcellular location">
    <subcellularLocation>
        <location evidence="1">Cytoplasm</location>
    </subcellularLocation>
</comment>
<comment type="similarity">
    <text evidence="1">Belongs to the CsrA/RsmA family.</text>
</comment>
<evidence type="ECO:0000255" key="1">
    <source>
        <dbReference type="HAMAP-Rule" id="MF_00167"/>
    </source>
</evidence>
<organism>
    <name type="scientific">Desulfitobacterium hafniense (strain DSM 10664 / DCB-2)</name>
    <dbReference type="NCBI Taxonomy" id="272564"/>
    <lineage>
        <taxon>Bacteria</taxon>
        <taxon>Bacillati</taxon>
        <taxon>Bacillota</taxon>
        <taxon>Clostridia</taxon>
        <taxon>Eubacteriales</taxon>
        <taxon>Desulfitobacteriaceae</taxon>
        <taxon>Desulfitobacterium</taxon>
    </lineage>
</organism>
<gene>
    <name evidence="1" type="primary">csrA</name>
    <name type="ordered locus">Dhaf_4191</name>
</gene>
<dbReference type="EMBL" id="CP001336">
    <property type="protein sequence ID" value="ACL22198.1"/>
    <property type="molecule type" value="Genomic_DNA"/>
</dbReference>
<dbReference type="RefSeq" id="WP_015945095.1">
    <property type="nucleotide sequence ID" value="NC_011830.1"/>
</dbReference>
<dbReference type="SMR" id="B8FTV6"/>
<dbReference type="KEGG" id="dhd:Dhaf_4191"/>
<dbReference type="HOGENOM" id="CLU_164837_2_1_9"/>
<dbReference type="Proteomes" id="UP000007726">
    <property type="component" value="Chromosome"/>
</dbReference>
<dbReference type="GO" id="GO:0005829">
    <property type="term" value="C:cytosol"/>
    <property type="evidence" value="ECO:0007669"/>
    <property type="project" value="TreeGrafter"/>
</dbReference>
<dbReference type="GO" id="GO:0048027">
    <property type="term" value="F:mRNA 5'-UTR binding"/>
    <property type="evidence" value="ECO:0007669"/>
    <property type="project" value="UniProtKB-UniRule"/>
</dbReference>
<dbReference type="GO" id="GO:0044781">
    <property type="term" value="P:bacterial-type flagellum organization"/>
    <property type="evidence" value="ECO:0007669"/>
    <property type="project" value="UniProtKB-KW"/>
</dbReference>
<dbReference type="GO" id="GO:0006402">
    <property type="term" value="P:mRNA catabolic process"/>
    <property type="evidence" value="ECO:0007669"/>
    <property type="project" value="InterPro"/>
</dbReference>
<dbReference type="GO" id="GO:0045947">
    <property type="term" value="P:negative regulation of translational initiation"/>
    <property type="evidence" value="ECO:0007669"/>
    <property type="project" value="UniProtKB-UniRule"/>
</dbReference>
<dbReference type="GO" id="GO:1902208">
    <property type="term" value="P:regulation of bacterial-type flagellum assembly"/>
    <property type="evidence" value="ECO:0007669"/>
    <property type="project" value="UniProtKB-UniRule"/>
</dbReference>
<dbReference type="GO" id="GO:0006109">
    <property type="term" value="P:regulation of carbohydrate metabolic process"/>
    <property type="evidence" value="ECO:0007669"/>
    <property type="project" value="InterPro"/>
</dbReference>
<dbReference type="FunFam" id="2.60.40.4380:FF:000002">
    <property type="entry name" value="Translational regulator CsrA"/>
    <property type="match status" value="1"/>
</dbReference>
<dbReference type="Gene3D" id="2.60.40.4380">
    <property type="entry name" value="Translational regulator CsrA"/>
    <property type="match status" value="1"/>
</dbReference>
<dbReference type="HAMAP" id="MF_00167">
    <property type="entry name" value="CsrA"/>
    <property type="match status" value="1"/>
</dbReference>
<dbReference type="InterPro" id="IPR003751">
    <property type="entry name" value="CsrA"/>
</dbReference>
<dbReference type="InterPro" id="IPR036107">
    <property type="entry name" value="CsrA_sf"/>
</dbReference>
<dbReference type="NCBIfam" id="TIGR00202">
    <property type="entry name" value="csrA"/>
    <property type="match status" value="1"/>
</dbReference>
<dbReference type="NCBIfam" id="NF002469">
    <property type="entry name" value="PRK01712.1"/>
    <property type="match status" value="1"/>
</dbReference>
<dbReference type="PANTHER" id="PTHR34984">
    <property type="entry name" value="CARBON STORAGE REGULATOR"/>
    <property type="match status" value="1"/>
</dbReference>
<dbReference type="PANTHER" id="PTHR34984:SF1">
    <property type="entry name" value="CARBON STORAGE REGULATOR"/>
    <property type="match status" value="1"/>
</dbReference>
<dbReference type="Pfam" id="PF02599">
    <property type="entry name" value="CsrA"/>
    <property type="match status" value="1"/>
</dbReference>
<dbReference type="SUPFAM" id="SSF117130">
    <property type="entry name" value="CsrA-like"/>
    <property type="match status" value="1"/>
</dbReference>